<accession>Q9ERE4</accession>
<comment type="function">
    <text>Phosphatidylinositol-4-phosphate-binding protein that links Golgi membranes to the cytoskeleton and may participate in the tensile force required for vesicle budding from the Golgi. Thereby, may play a role in Golgi membrane trafficking and could indirectly give its flattened shape to the Golgi apparatus. May also bind to the coatomer to regulate Golgi membrane trafficking. May play a role in anterograde transport from the Golgi to the plasma membrane and regulate secretion. Has also been involved in the control of the localization of Golgi enzymes through interaction with their cytoplasmic part. May play an indirect role in cell migration. Has also been involved in the modulation of mTOR signaling. May also be involved in the regulation of mitochondrial lipids biosynthesis.</text>
</comment>
<comment type="subunit">
    <text evidence="1">Homodimer. Interacts with the coatomer complex. Interacts with MYO18A; the interaction is direct and may link Golgi membranes to the actin cytoskeleton. Interacts with GCNT1; may control its retention in the Golgi. Interacts with VPS35 (By similarity).</text>
</comment>
<comment type="subcellular location">
    <subcellularLocation>
        <location>Golgi apparatus</location>
        <location>Golgi stack membrane</location>
        <topology>Peripheral membrane protein</topology>
        <orientation>Cytoplasmic side</orientation>
    </subcellularLocation>
    <subcellularLocation>
        <location evidence="1">Golgi apparatus</location>
        <location evidence="1">trans-Golgi network membrane</location>
        <topology evidence="1">Peripheral membrane protein</topology>
        <orientation evidence="1">Cytoplasmic side</orientation>
    </subcellularLocation>
    <subcellularLocation>
        <location>Mitochondrion intermembrane space</location>
    </subcellularLocation>
    <subcellularLocation>
        <location evidence="1">Cell membrane</location>
    </subcellularLocation>
    <subcellularLocation>
        <location evidence="1">Endosome</location>
    </subcellularLocation>
    <text evidence="4">Phosphatidylinositol 4-phosphate-binding and oligomerization participate in the recruitment onto Golgi membranes.</text>
</comment>
<comment type="PTM">
    <text evidence="3">Phosphorylated.</text>
</comment>
<comment type="similarity">
    <text evidence="4">Belongs to the GOLPH3/VPS74 family.</text>
</comment>
<organism>
    <name type="scientific">Rattus norvegicus</name>
    <name type="common">Rat</name>
    <dbReference type="NCBI Taxonomy" id="10116"/>
    <lineage>
        <taxon>Eukaryota</taxon>
        <taxon>Metazoa</taxon>
        <taxon>Chordata</taxon>
        <taxon>Craniata</taxon>
        <taxon>Vertebrata</taxon>
        <taxon>Euteleostomi</taxon>
        <taxon>Mammalia</taxon>
        <taxon>Eutheria</taxon>
        <taxon>Euarchontoglires</taxon>
        <taxon>Glires</taxon>
        <taxon>Rodentia</taxon>
        <taxon>Myomorpha</taxon>
        <taxon>Muroidea</taxon>
        <taxon>Muridae</taxon>
        <taxon>Murinae</taxon>
        <taxon>Rattus</taxon>
    </lineage>
</organism>
<reference key="1">
    <citation type="journal article" date="2000" name="Traffic">
        <title>GMx33: a novel family of trans-Golgi proteins identified by proteomics.</title>
        <authorList>
            <person name="Wu C.C."/>
            <person name="Taylor R.S."/>
            <person name="Lane D.R."/>
            <person name="Ladinsky M.S."/>
            <person name="Weisz J.A."/>
            <person name="Howell K.E."/>
        </authorList>
    </citation>
    <scope>NUCLEOTIDE SEQUENCE [MRNA]</scope>
    <scope>PHOSPHORYLATION</scope>
    <scope>IDENTIFICATION BY MASS SPECTROMETRY</scope>
    <scope>SUBCELLULAR LOCATION</scope>
</reference>
<reference key="2">
    <citation type="submission" date="2007-04" db="UniProtKB">
        <authorList>
            <person name="Lubec G."/>
            <person name="Diao W."/>
        </authorList>
    </citation>
    <scope>PROTEIN SEQUENCE OF 91-100; 124-138 AND 270-282</scope>
    <scope>IDENTIFICATION BY MASS SPECTROMETRY</scope>
    <source>
        <strain>Sprague-Dawley</strain>
        <tissue>Hippocampus</tissue>
    </source>
</reference>
<reference key="3">
    <citation type="journal article" date="2006" name="Mol. Biol. Cell">
        <title>GMx33 associates with the trans-Golgi matrix in a dynamic manner and sorts within tubules exiting the Golgi.</title>
        <authorList>
            <person name="Snyder C.M."/>
            <person name="Mardones G.A."/>
            <person name="Ladinsky M.S."/>
            <person name="Howell K.E."/>
        </authorList>
    </citation>
    <scope>SUBCELLULAR LOCATION</scope>
</reference>
<evidence type="ECO:0000250" key="1"/>
<evidence type="ECO:0000256" key="2">
    <source>
        <dbReference type="SAM" id="MobiDB-lite"/>
    </source>
</evidence>
<evidence type="ECO:0000269" key="3">
    <source>
    </source>
</evidence>
<evidence type="ECO:0000305" key="4"/>
<dbReference type="EMBL" id="AF311954">
    <property type="protein sequence ID" value="AAG33623.1"/>
    <property type="molecule type" value="mRNA"/>
</dbReference>
<dbReference type="SMR" id="Q9ERE4"/>
<dbReference type="FunCoup" id="Q9ERE4">
    <property type="interactions" value="2433"/>
</dbReference>
<dbReference type="STRING" id="10116.ENSRNOP00000017276"/>
<dbReference type="PhosphoSitePlus" id="Q9ERE4"/>
<dbReference type="jPOST" id="Q9ERE4"/>
<dbReference type="PaxDb" id="10116-ENSRNOP00000017276"/>
<dbReference type="AGR" id="RGD:621226"/>
<dbReference type="RGD" id="621226">
    <property type="gene designation" value="Golph3"/>
</dbReference>
<dbReference type="eggNOG" id="KOG3983">
    <property type="taxonomic scope" value="Eukaryota"/>
</dbReference>
<dbReference type="InParanoid" id="Q9ERE4"/>
<dbReference type="PhylomeDB" id="Q9ERE4"/>
<dbReference type="PRO" id="PR:Q9ERE4"/>
<dbReference type="Proteomes" id="UP000002494">
    <property type="component" value="Unplaced"/>
</dbReference>
<dbReference type="GO" id="GO:0005829">
    <property type="term" value="C:cytosol"/>
    <property type="evidence" value="ECO:0000314"/>
    <property type="project" value="UniProtKB"/>
</dbReference>
<dbReference type="GO" id="GO:0005768">
    <property type="term" value="C:endosome"/>
    <property type="evidence" value="ECO:0000314"/>
    <property type="project" value="UniProtKB"/>
</dbReference>
<dbReference type="GO" id="GO:0005794">
    <property type="term" value="C:Golgi apparatus"/>
    <property type="evidence" value="ECO:0000266"/>
    <property type="project" value="RGD"/>
</dbReference>
<dbReference type="GO" id="GO:0031985">
    <property type="term" value="C:Golgi cisterna"/>
    <property type="evidence" value="ECO:0000250"/>
    <property type="project" value="UniProtKB"/>
</dbReference>
<dbReference type="GO" id="GO:0032580">
    <property type="term" value="C:Golgi cisterna membrane"/>
    <property type="evidence" value="ECO:0007669"/>
    <property type="project" value="UniProtKB-SubCell"/>
</dbReference>
<dbReference type="GO" id="GO:0000139">
    <property type="term" value="C:Golgi membrane"/>
    <property type="evidence" value="ECO:0007669"/>
    <property type="project" value="GOC"/>
</dbReference>
<dbReference type="GO" id="GO:0005758">
    <property type="term" value="C:mitochondrial intermembrane space"/>
    <property type="evidence" value="ECO:0007669"/>
    <property type="project" value="UniProtKB-SubCell"/>
</dbReference>
<dbReference type="GO" id="GO:0005739">
    <property type="term" value="C:mitochondrion"/>
    <property type="evidence" value="ECO:0000250"/>
    <property type="project" value="UniProtKB"/>
</dbReference>
<dbReference type="GO" id="GO:0005886">
    <property type="term" value="C:plasma membrane"/>
    <property type="evidence" value="ECO:0000314"/>
    <property type="project" value="UniProtKB"/>
</dbReference>
<dbReference type="GO" id="GO:0005802">
    <property type="term" value="C:trans-Golgi network"/>
    <property type="evidence" value="ECO:0000314"/>
    <property type="project" value="UniProtKB"/>
</dbReference>
<dbReference type="GO" id="GO:0140312">
    <property type="term" value="F:cargo adaptor activity"/>
    <property type="evidence" value="ECO:0000266"/>
    <property type="project" value="RGD"/>
</dbReference>
<dbReference type="GO" id="GO:0019899">
    <property type="term" value="F:enzyme binding"/>
    <property type="evidence" value="ECO:0000266"/>
    <property type="project" value="RGD"/>
</dbReference>
<dbReference type="GO" id="GO:0070273">
    <property type="term" value="F:phosphatidylinositol-4-phosphate binding"/>
    <property type="evidence" value="ECO:0000250"/>
    <property type="project" value="UniProtKB"/>
</dbReference>
<dbReference type="GO" id="GO:0090164">
    <property type="term" value="P:asymmetric Golgi ribbon formation"/>
    <property type="evidence" value="ECO:0000266"/>
    <property type="project" value="RGD"/>
</dbReference>
<dbReference type="GO" id="GO:0060352">
    <property type="term" value="P:cell adhesion molecule production"/>
    <property type="evidence" value="ECO:0000250"/>
    <property type="project" value="UniProtKB"/>
</dbReference>
<dbReference type="GO" id="GO:0016477">
    <property type="term" value="P:cell migration"/>
    <property type="evidence" value="ECO:0000250"/>
    <property type="project" value="UniProtKB"/>
</dbReference>
<dbReference type="GO" id="GO:0072752">
    <property type="term" value="P:cellular response to rapamycin"/>
    <property type="evidence" value="ECO:0000250"/>
    <property type="project" value="UniProtKB"/>
</dbReference>
<dbReference type="GO" id="GO:0010467">
    <property type="term" value="P:gene expression"/>
    <property type="evidence" value="ECO:0000250"/>
    <property type="project" value="UniProtKB"/>
</dbReference>
<dbReference type="GO" id="GO:0009101">
    <property type="term" value="P:glycoprotein biosynthetic process"/>
    <property type="evidence" value="ECO:0000250"/>
    <property type="project" value="UniProtKB"/>
</dbReference>
<dbReference type="GO" id="GO:0007030">
    <property type="term" value="P:Golgi organization"/>
    <property type="evidence" value="ECO:0000250"/>
    <property type="project" value="UniProtKB"/>
</dbReference>
<dbReference type="GO" id="GO:0090161">
    <property type="term" value="P:Golgi ribbon formation"/>
    <property type="evidence" value="ECO:0000266"/>
    <property type="project" value="RGD"/>
</dbReference>
<dbReference type="GO" id="GO:0043001">
    <property type="term" value="P:Golgi to plasma membrane protein transport"/>
    <property type="evidence" value="ECO:0000250"/>
    <property type="project" value="UniProtKB"/>
</dbReference>
<dbReference type="GO" id="GO:0048194">
    <property type="term" value="P:Golgi vesicle budding"/>
    <property type="evidence" value="ECO:0000250"/>
    <property type="project" value="UniProtKB"/>
</dbReference>
<dbReference type="GO" id="GO:0030032">
    <property type="term" value="P:lamellipodium assembly"/>
    <property type="evidence" value="ECO:0000250"/>
    <property type="project" value="UniProtKB"/>
</dbReference>
<dbReference type="GO" id="GO:0050901">
    <property type="term" value="P:leukocyte tethering or rolling"/>
    <property type="evidence" value="ECO:0000250"/>
    <property type="project" value="UniProtKB"/>
</dbReference>
<dbReference type="GO" id="GO:0043066">
    <property type="term" value="P:negative regulation of apoptotic process"/>
    <property type="evidence" value="ECO:0000266"/>
    <property type="project" value="RGD"/>
</dbReference>
<dbReference type="GO" id="GO:0050714">
    <property type="term" value="P:positive regulation of protein secretion"/>
    <property type="evidence" value="ECO:0000250"/>
    <property type="project" value="UniProtKB"/>
</dbReference>
<dbReference type="GO" id="GO:0032008">
    <property type="term" value="P:positive regulation of TOR signaling"/>
    <property type="evidence" value="ECO:0000250"/>
    <property type="project" value="UniProtKB"/>
</dbReference>
<dbReference type="GO" id="GO:0045053">
    <property type="term" value="P:protein retention in Golgi apparatus"/>
    <property type="evidence" value="ECO:0000250"/>
    <property type="project" value="UniProtKB"/>
</dbReference>
<dbReference type="GO" id="GO:0009306">
    <property type="term" value="P:protein secretion"/>
    <property type="evidence" value="ECO:0000250"/>
    <property type="project" value="UniProtKB"/>
</dbReference>
<dbReference type="GO" id="GO:0140450">
    <property type="term" value="P:protein targeting to Golgi apparatus"/>
    <property type="evidence" value="ECO:0000266"/>
    <property type="project" value="RGD"/>
</dbReference>
<dbReference type="GO" id="GO:0010821">
    <property type="term" value="P:regulation of mitochondrion organization"/>
    <property type="evidence" value="ECO:0000250"/>
    <property type="project" value="UniProtKB"/>
</dbReference>
<dbReference type="GO" id="GO:0006890">
    <property type="term" value="P:retrograde vesicle-mediated transport, Golgi to endoplasmic reticulum"/>
    <property type="evidence" value="ECO:0000318"/>
    <property type="project" value="GO_Central"/>
</dbReference>
<dbReference type="FunFam" id="1.10.3630.10:FF:000001">
    <property type="entry name" value="Golgi phosphoprotein 3"/>
    <property type="match status" value="1"/>
</dbReference>
<dbReference type="Gene3D" id="1.10.3630.10">
    <property type="entry name" value="yeast vps74-n-term truncation variant domain like"/>
    <property type="match status" value="1"/>
</dbReference>
<dbReference type="InterPro" id="IPR008628">
    <property type="entry name" value="GPP34-like"/>
</dbReference>
<dbReference type="InterPro" id="IPR038261">
    <property type="entry name" value="GPP34-like_sf"/>
</dbReference>
<dbReference type="PANTHER" id="PTHR12704:SF3">
    <property type="entry name" value="GOLGI PHOSPHOPROTEIN 3"/>
    <property type="match status" value="1"/>
</dbReference>
<dbReference type="PANTHER" id="PTHR12704">
    <property type="entry name" value="TRANS-GOLGI PROTEIN GMX33"/>
    <property type="match status" value="1"/>
</dbReference>
<dbReference type="Pfam" id="PF05719">
    <property type="entry name" value="GPP34"/>
    <property type="match status" value="1"/>
</dbReference>
<sequence>MTSLTQRSSGLVQRRTEASRNAADKERAAGGGGGNGEDEAQSRRDEQDDDDKGDSKETRLTLMEEVLLLGLKDREGYTSFWNDCISSGLRGCMLIELALRGRLQLEACGMRRKSLLTRKVICKSDAPTGDVLLDEALKHVKETQPPETVQNWIELLSGETWNPLKLHYQLRNVRERLAKNLVEKGVLTTEKQNFLLFDMTTHPLTNNNIKQRLIKKVQEAVLDKWVNDPHRMDKRLLALIYLAHASDVLENAFAPLLDEQYDLATKRVRQLLDLDPEVECLKANTNEVLWAVVAAFTK</sequence>
<gene>
    <name type="primary">Golph3</name>
    <name type="synonym">Gmx33</name>
    <name type="synonym">Gpp34</name>
</gene>
<protein>
    <recommendedName>
        <fullName>Golgi phosphoprotein 3</fullName>
    </recommendedName>
    <alternativeName>
        <fullName>Coat protein GPP34</fullName>
    </alternativeName>
    <alternativeName>
        <fullName>Trans-Golgi protein GMx33</fullName>
    </alternativeName>
</protein>
<keyword id="KW-1003">Cell membrane</keyword>
<keyword id="KW-0903">Direct protein sequencing</keyword>
<keyword id="KW-1015">Disulfide bond</keyword>
<keyword id="KW-0967">Endosome</keyword>
<keyword id="KW-0333">Golgi apparatus</keyword>
<keyword id="KW-0446">Lipid-binding</keyword>
<keyword id="KW-0472">Membrane</keyword>
<keyword id="KW-0496">Mitochondrion</keyword>
<keyword id="KW-0597">Phosphoprotein</keyword>
<keyword id="KW-0653">Protein transport</keyword>
<keyword id="KW-1185">Reference proteome</keyword>
<keyword id="KW-0813">Transport</keyword>
<name>GOLP3_RAT</name>
<feature type="chain" id="PRO_0000123821" description="Golgi phosphoprotein 3">
    <location>
        <begin position="1"/>
        <end position="298"/>
    </location>
</feature>
<feature type="region of interest" description="Disordered" evidence="2">
    <location>
        <begin position="1"/>
        <end position="57"/>
    </location>
</feature>
<feature type="region of interest" description="Beta-hairpin required for oligomerization" evidence="1">
    <location>
        <begin position="190"/>
        <end position="201"/>
    </location>
</feature>
<feature type="compositionally biased region" description="Polar residues" evidence="2">
    <location>
        <begin position="1"/>
        <end position="11"/>
    </location>
</feature>
<feature type="compositionally biased region" description="Basic and acidic residues" evidence="2">
    <location>
        <begin position="14"/>
        <end position="28"/>
    </location>
</feature>
<feature type="binding site" evidence="1">
    <location>
        <position position="81"/>
    </location>
    <ligand>
        <name>a 1,2-diacyl-sn-glycero-3-phospho-(1D-myo-inositol 4-phosphate)</name>
        <dbReference type="ChEBI" id="CHEBI:58178"/>
    </ligand>
</feature>
<feature type="binding site" evidence="1">
    <location>
        <position position="90"/>
    </location>
    <ligand>
        <name>a 1,2-diacyl-sn-glycero-3-phospho-(1D-myo-inositol 4-phosphate)</name>
        <dbReference type="ChEBI" id="CHEBI:58178"/>
    </ligand>
</feature>
<feature type="binding site" evidence="1">
    <location>
        <position position="171"/>
    </location>
    <ligand>
        <name>a 1,2-diacyl-sn-glycero-3-phospho-(1D-myo-inositol 4-phosphate)</name>
        <dbReference type="ChEBI" id="CHEBI:58178"/>
    </ligand>
</feature>
<feature type="binding site" evidence="1">
    <location>
        <position position="174"/>
    </location>
    <ligand>
        <name>a 1,2-diacyl-sn-glycero-3-phospho-(1D-myo-inositol 4-phosphate)</name>
        <dbReference type="ChEBI" id="CHEBI:58178"/>
    </ligand>
</feature>
<feature type="disulfide bond" evidence="1">
    <location>
        <begin position="84"/>
        <end position="108"/>
    </location>
</feature>
<proteinExistence type="evidence at protein level"/>